<organism>
    <name type="scientific">Rattus norvegicus</name>
    <name type="common">Rat</name>
    <dbReference type="NCBI Taxonomy" id="10116"/>
    <lineage>
        <taxon>Eukaryota</taxon>
        <taxon>Metazoa</taxon>
        <taxon>Chordata</taxon>
        <taxon>Craniata</taxon>
        <taxon>Vertebrata</taxon>
        <taxon>Euteleostomi</taxon>
        <taxon>Mammalia</taxon>
        <taxon>Eutheria</taxon>
        <taxon>Euarchontoglires</taxon>
        <taxon>Glires</taxon>
        <taxon>Rodentia</taxon>
        <taxon>Myomorpha</taxon>
        <taxon>Muroidea</taxon>
        <taxon>Muridae</taxon>
        <taxon>Murinae</taxon>
        <taxon>Rattus</taxon>
    </lineage>
</organism>
<keyword id="KW-0903">Direct protein sequencing</keyword>
<keyword id="KW-1015">Disulfide bond</keyword>
<keyword id="KW-0325">Glycoprotein</keyword>
<keyword id="KW-0328">Glycosyltransferase</keyword>
<keyword id="KW-0333">Golgi apparatus</keyword>
<keyword id="KW-0472">Membrane</keyword>
<keyword id="KW-1185">Reference proteome</keyword>
<keyword id="KW-0964">Secreted</keyword>
<keyword id="KW-0735">Signal-anchor</keyword>
<keyword id="KW-0808">Transferase</keyword>
<keyword id="KW-0812">Transmembrane</keyword>
<keyword id="KW-1133">Transmembrane helix</keyword>
<protein>
    <recommendedName>
        <fullName>CMP-N-acetylneuraminate-beta-1,4-galactoside alpha-2,3-sialyltransferase</fullName>
        <ecNumber evidence="2">2.4.3.6</ecNumber>
    </recommendedName>
    <alternativeName>
        <fullName>Beta-galactoside alpha-2,3-sialyltransferase 3</fullName>
        <shortName>Alpha 2,3-ST 3</shortName>
    </alternativeName>
    <alternativeName>
        <fullName>Gal beta-1,3(4) GlcNAc alpha-2,3 sialyltransferase</fullName>
    </alternativeName>
    <alternativeName>
        <fullName>N-acetyllactosaminide alpha-2,3-sialyltransferase</fullName>
    </alternativeName>
    <alternativeName>
        <fullName>ST3Gal III</fullName>
        <shortName>ST3GalIII</shortName>
    </alternativeName>
    <alternativeName>
        <fullName>ST3N</fullName>
    </alternativeName>
    <alternativeName>
        <fullName>Sialyltransferase 6</fullName>
    </alternativeName>
    <component>
        <recommendedName>
            <fullName>CMP-N-acetylneuraminate-beta-1,4-galactoside alpha-2,3-sialyltransferase soluble form</fullName>
        </recommendedName>
    </component>
</protein>
<evidence type="ECO:0000250" key="1"/>
<evidence type="ECO:0000250" key="2">
    <source>
        <dbReference type="UniProtKB" id="P97325"/>
    </source>
</evidence>
<evidence type="ECO:0000255" key="3"/>
<evidence type="ECO:0000305" key="4"/>
<sequence length="374" mass="42082">MGLLVFVRNLLLALCLFLVLGFLYYSAWKLHLLQWEDSNSLILSLDSAGQTLGTEYDRLGFLLKLDSKLPAELATKYANFSEGACKPGYASAMMTAIFPRFSKPAPMFLDDSFRKWARIREFVPPFGIKGQDNLIKAILSVTKEYRLTPALDSLHCRRCIIVGNGGVLANKSLGSRIDDYDIVIRLNSAPVKGFEKDVGSKTTLRITYPEGAMQRPEQYERDSLFVLAGFKWQDFKWLKYIVYKERVSASDGFWKSVATRVPKEPPEIRILNPYFIQEAAFTLIGLPFNNGLMGRGNIPTLGSVAVTMALDGCDEVAVAGFGYDMNTPNAPLHYYETVRMAAIKESWTHNIQREKEFLRKLVKARVITDLSSGI</sequence>
<accession>Q02734</accession>
<reference key="1">
    <citation type="journal article" date="1992" name="J. Biol. Chem.">
        <title>Primary structure of Gal beta 1,3(4)GlcNAc alpha 2,3-sialyltransferase determined by mass spectrometry sequence analysis and molecular cloning. Evidence for a protein motif in the sialyltransferase gene family.</title>
        <authorList>
            <person name="Wen D.X."/>
            <person name="Livingston B.D."/>
            <person name="Medzihradszky K.F."/>
            <person name="Kelm S."/>
            <person name="Burlingame A.L."/>
            <person name="Paulson J.C."/>
        </authorList>
    </citation>
    <scope>NUCLEOTIDE SEQUENCE [MRNA]</scope>
    <scope>PARTIAL PROTEIN SEQUENCE</scope>
    <source>
        <tissue>Liver</tissue>
    </source>
</reference>
<feature type="chain" id="PRO_0000012143" description="CMP-N-acetylneuraminate-beta-1,4-galactoside alpha-2,3-sialyltransferase">
    <location>
        <begin position="1"/>
        <end position="374"/>
    </location>
</feature>
<feature type="chain" id="PRO_0000012144" description="CMP-N-acetylneuraminate-beta-1,4-galactoside alpha-2,3-sialyltransferase soluble form">
    <location>
        <begin position="48"/>
        <end position="374"/>
    </location>
</feature>
<feature type="topological domain" description="Cytoplasmic" evidence="3">
    <location>
        <begin position="1"/>
        <end position="8"/>
    </location>
</feature>
<feature type="transmembrane region" description="Helical; Signal-anchor for type II membrane protein" evidence="3">
    <location>
        <begin position="9"/>
        <end position="28"/>
    </location>
</feature>
<feature type="topological domain" description="Lumenal" evidence="3">
    <location>
        <begin position="29"/>
        <end position="374"/>
    </location>
</feature>
<feature type="site" description="Cleavage; partial">
    <location>
        <begin position="46"/>
        <end position="47"/>
    </location>
</feature>
<feature type="glycosylation site" description="N-linked (GlcNAc...) asparagine" evidence="3">
    <location>
        <position position="79"/>
    </location>
</feature>
<feature type="glycosylation site" description="N-linked (GlcNAc...) asparagine" evidence="3">
    <location>
        <position position="170"/>
    </location>
</feature>
<feature type="disulfide bond" evidence="1">
    <location>
        <begin position="159"/>
        <end position="313"/>
    </location>
</feature>
<comment type="function">
    <text evidence="2">Catalyzes the formation of the NeuAc-alpha-2,3-Gal-beta-1,4-GlcNAc-, NeuAc-alpha-2,3-Gal-beta-1,3-GlcNAc- and NeuAc-alpha-2,3-Gal-beta-1,3-GalNAc- sequences found in terminal carbohydrate groups of glycoproteins and glycolipids. The highest activity is toward Gal-beta-1,3-GlcNAc and the lowest toward Gal-beta-1,3-GalNAc.</text>
</comment>
<comment type="catalytic activity">
    <reaction evidence="2">
        <text>a beta-D-galactosyl-(1-&gt;4)-N-acetyl-beta-D-glucosaminyl derivative + CMP-N-acetyl-beta-neuraminate = an N-acetyl-alpha-neuraminyl-(2-&gt;3)-beta-D-galactosyl-(1-&gt;4)-N-acetyl-beta-D-glucosaminyl derivative + CMP + H(+)</text>
        <dbReference type="Rhea" id="RHEA:52316"/>
        <dbReference type="ChEBI" id="CHEBI:15378"/>
        <dbReference type="ChEBI" id="CHEBI:57812"/>
        <dbReference type="ChEBI" id="CHEBI:60377"/>
        <dbReference type="ChEBI" id="CHEBI:133507"/>
        <dbReference type="ChEBI" id="CHEBI:136545"/>
        <dbReference type="EC" id="2.4.3.6"/>
    </reaction>
</comment>
<comment type="pathway">
    <text>Protein modification; protein glycosylation.</text>
</comment>
<comment type="subcellular location">
    <subcellularLocation>
        <location>Golgi apparatus</location>
        <location>Golgi stack membrane</location>
        <topology>Single-pass type II membrane protein</topology>
    </subcellularLocation>
    <subcellularLocation>
        <location>Secreted</location>
    </subcellularLocation>
    <text>Membrane-bound form in trans cisternae of Golgi. Secreted into the body fluid.</text>
</comment>
<comment type="tissue specificity">
    <text>Found in all tissues tested. High expression found in brain, liver, kidney, colon, heart and lung.</text>
</comment>
<comment type="PTM">
    <text>The soluble form derives from the membrane form by proteolytic processing.</text>
</comment>
<comment type="similarity">
    <text evidence="4">Belongs to the glycosyltransferase 29 family.</text>
</comment>
<gene>
    <name type="primary">St3gal3</name>
    <name type="synonym">Siat6</name>
</gene>
<proteinExistence type="evidence at protein level"/>
<name>SIAT6_RAT</name>
<dbReference type="EC" id="2.4.3.6" evidence="2"/>
<dbReference type="EMBL" id="M97754">
    <property type="protein sequence ID" value="AAA42146.1"/>
    <property type="molecule type" value="mRNA"/>
</dbReference>
<dbReference type="PIR" id="A45074">
    <property type="entry name" value="A45074"/>
</dbReference>
<dbReference type="RefSeq" id="NP_113885.1">
    <property type="nucleotide sequence ID" value="NM_031697.1"/>
</dbReference>
<dbReference type="SMR" id="Q02734"/>
<dbReference type="FunCoup" id="Q02734">
    <property type="interactions" value="85"/>
</dbReference>
<dbReference type="STRING" id="10116.ENSRNOP00000053685"/>
<dbReference type="BindingDB" id="Q02734"/>
<dbReference type="ChEMBL" id="CHEMBL3211"/>
<dbReference type="CAZy" id="GT29">
    <property type="family name" value="Glycosyltransferase Family 29"/>
</dbReference>
<dbReference type="GlyCosmos" id="Q02734">
    <property type="glycosylation" value="2 sites, No reported glycans"/>
</dbReference>
<dbReference type="GlyGen" id="Q02734">
    <property type="glycosylation" value="2 sites"/>
</dbReference>
<dbReference type="PhosphoSitePlus" id="Q02734"/>
<dbReference type="PaxDb" id="10116-ENSRNOP00000053685"/>
<dbReference type="GeneID" id="64445"/>
<dbReference type="KEGG" id="rno:64445"/>
<dbReference type="UCSC" id="RGD:68414">
    <property type="organism name" value="rat"/>
</dbReference>
<dbReference type="AGR" id="RGD:68414"/>
<dbReference type="CTD" id="6487"/>
<dbReference type="RGD" id="68414">
    <property type="gene designation" value="St3gal3"/>
</dbReference>
<dbReference type="eggNOG" id="KOG2692">
    <property type="taxonomic scope" value="Eukaryota"/>
</dbReference>
<dbReference type="InParanoid" id="Q02734"/>
<dbReference type="OrthoDB" id="10264956at2759"/>
<dbReference type="PhylomeDB" id="Q02734"/>
<dbReference type="BRENDA" id="2.4.99.6">
    <property type="organism ID" value="5301"/>
</dbReference>
<dbReference type="Reactome" id="R-RNO-2022854">
    <property type="pathway name" value="Keratan sulfate biosynthesis"/>
</dbReference>
<dbReference type="Reactome" id="R-RNO-4085001">
    <property type="pathway name" value="Sialic acid metabolism"/>
</dbReference>
<dbReference type="Reactome" id="R-RNO-9037629">
    <property type="pathway name" value="Lewis blood group biosynthesis"/>
</dbReference>
<dbReference type="Reactome" id="R-RNO-977068">
    <property type="pathway name" value="Termination of O-glycan biosynthesis"/>
</dbReference>
<dbReference type="Reactome" id="R-RNO-9840309">
    <property type="pathway name" value="Glycosphingolipid biosynthesis"/>
</dbReference>
<dbReference type="UniPathway" id="UPA00378"/>
<dbReference type="PRO" id="PR:Q02734"/>
<dbReference type="Proteomes" id="UP000002494">
    <property type="component" value="Unplaced"/>
</dbReference>
<dbReference type="GO" id="GO:0005576">
    <property type="term" value="C:extracellular region"/>
    <property type="evidence" value="ECO:0007669"/>
    <property type="project" value="UniProtKB-SubCell"/>
</dbReference>
<dbReference type="GO" id="GO:0032580">
    <property type="term" value="C:Golgi cisterna membrane"/>
    <property type="evidence" value="ECO:0007669"/>
    <property type="project" value="UniProtKB-SubCell"/>
</dbReference>
<dbReference type="GO" id="GO:0003836">
    <property type="term" value="F:beta-galactoside (CMP) alpha-2,3-sialyltransferase activity"/>
    <property type="evidence" value="ECO:0000266"/>
    <property type="project" value="RGD"/>
</dbReference>
<dbReference type="GO" id="GO:0008118">
    <property type="term" value="F:N-acetyllactosaminide alpha-2,3-sialyltransferase activity"/>
    <property type="evidence" value="ECO:0000304"/>
    <property type="project" value="RGD"/>
</dbReference>
<dbReference type="GO" id="GO:0008373">
    <property type="term" value="F:sialyltransferase activity"/>
    <property type="evidence" value="ECO:0000318"/>
    <property type="project" value="GO_Central"/>
</dbReference>
<dbReference type="GO" id="GO:0010706">
    <property type="term" value="P:ganglioside biosynthetic process via lactosylceramide"/>
    <property type="evidence" value="ECO:0000266"/>
    <property type="project" value="RGD"/>
</dbReference>
<dbReference type="GO" id="GO:0006486">
    <property type="term" value="P:protein glycosylation"/>
    <property type="evidence" value="ECO:0000266"/>
    <property type="project" value="RGD"/>
</dbReference>
<dbReference type="CDD" id="cd23981">
    <property type="entry name" value="GT29_ST3GAL3"/>
    <property type="match status" value="1"/>
</dbReference>
<dbReference type="FunFam" id="3.90.1480.20:FF:000003">
    <property type="entry name" value="CMP-N-acetylneuraminate-beta-1,4-galactoside alpha-2,3-sialyltransferase isoform X1"/>
    <property type="match status" value="1"/>
</dbReference>
<dbReference type="Gene3D" id="3.90.1480.20">
    <property type="entry name" value="Glycosyl transferase family 29"/>
    <property type="match status" value="1"/>
</dbReference>
<dbReference type="InterPro" id="IPR001675">
    <property type="entry name" value="Glyco_trans_29"/>
</dbReference>
<dbReference type="InterPro" id="IPR051142">
    <property type="entry name" value="Glycosyltransferase_29"/>
</dbReference>
<dbReference type="InterPro" id="IPR038578">
    <property type="entry name" value="GT29-like_sf"/>
</dbReference>
<dbReference type="InterPro" id="IPR012163">
    <property type="entry name" value="Sialyl_trans"/>
</dbReference>
<dbReference type="PANTHER" id="PTHR13713:SF37">
    <property type="entry name" value="CMP-N-ACETYLNEURAMINATE-BETA-1,4-GALACTOSIDE ALPHA-2,3-SIALYLTRANSFERASE"/>
    <property type="match status" value="1"/>
</dbReference>
<dbReference type="PANTHER" id="PTHR13713">
    <property type="entry name" value="SIALYLTRANSFERASE"/>
    <property type="match status" value="1"/>
</dbReference>
<dbReference type="Pfam" id="PF00777">
    <property type="entry name" value="Glyco_transf_29"/>
    <property type="match status" value="1"/>
</dbReference>
<dbReference type="PIRSF" id="PIRSF005557">
    <property type="entry name" value="Sialyl_trans"/>
    <property type="match status" value="1"/>
</dbReference>